<keyword id="KW-0067">ATP-binding</keyword>
<keyword id="KW-0143">Chaperone</keyword>
<keyword id="KW-0963">Cytoplasm</keyword>
<keyword id="KW-0547">Nucleotide-binding</keyword>
<keyword id="KW-1185">Reference proteome</keyword>
<feature type="chain" id="PRO_0000128309" description="T-complex protein 1 subunit alpha">
    <location>
        <begin position="1"/>
        <end position="549"/>
    </location>
</feature>
<feature type="sequence conflict" description="In Ref. 1; AAB05072." evidence="1" ref="1">
    <original>K</original>
    <variation>F</variation>
    <location>
        <position position="469"/>
    </location>
</feature>
<gene>
    <name type="primary">cct-1</name>
    <name type="synonym">tcp-1</name>
    <name type="ORF">T05C12.7</name>
</gene>
<name>TCPA_CAEEL</name>
<organism>
    <name type="scientific">Caenorhabditis elegans</name>
    <dbReference type="NCBI Taxonomy" id="6239"/>
    <lineage>
        <taxon>Eukaryota</taxon>
        <taxon>Metazoa</taxon>
        <taxon>Ecdysozoa</taxon>
        <taxon>Nematoda</taxon>
        <taxon>Chromadorea</taxon>
        <taxon>Rhabditida</taxon>
        <taxon>Rhabditina</taxon>
        <taxon>Rhabditomorpha</taxon>
        <taxon>Rhabditoidea</taxon>
        <taxon>Rhabditidae</taxon>
        <taxon>Peloderinae</taxon>
        <taxon>Caenorhabditis</taxon>
    </lineage>
</organism>
<comment type="function">
    <text>Molecular chaperone; assists the folding of proteins upon ATP hydrolysis. Known to play a role, in vitro, in the folding of actin and tubulin.</text>
</comment>
<comment type="subunit">
    <text>Heterooligomeric complex of about 850 to 900 kDa that forms two stacked rings, 12 to 16 nm in diameter.</text>
</comment>
<comment type="subcellular location">
    <subcellularLocation>
        <location>Cytoplasm</location>
    </subcellularLocation>
</comment>
<comment type="similarity">
    <text evidence="1">Belongs to the TCP-1 chaperonin family.</text>
</comment>
<evidence type="ECO:0000305" key="1"/>
<proteinExistence type="inferred from homology"/>
<accession>P41988</accession>
<accession>Q22228</accession>
<sequence>MASAGDSILALTGKRTTGQGIRSQNVTAAVAIANIVKSSLGPVGLDKMLVDDVGDVIVTNDGATILKQLEVEHPAGKVLVELAQLQDEEVGDGTTSVVIVAAELLKRADELVKQKVHPTTIINGYRLACKEAVKYISENISFTSDSIGRQSVVNAAKTSMSSKIIGPDADFFGELVVDAAEAVRVENNGKVTYPINAVNVLKAHGKSARESVLVKGYALNCTVASQAMPLRVQNAKIACLDFSLMKAKMHLGISVVVEDPAKLEAIRREEFDITKRRIDKILKAGANVVLTTGGIDDLCLKQFVESGAMAVRRCKKSDLKRIAKATGATLTVSLATLEGDEAFDASLLGHADEIVQERISDDELILIKGPKSRTASSIILRGANDVMLDEMERSVHDSLCVVRRVLESKKLVAGGGAVETSLSLFLETYAQTLSSREQLAVAEFASALLIIPKVLASNAARDSTDLVTKLRAYHSKAQLIPQLQHLKWAGLDLEEGTIRDNKEAGILEPALSKVKSLKFATEAAITILRIDDLIKLDKQEPLGGDDCHA</sequence>
<reference key="1">
    <citation type="journal article" date="1995" name="Gene">
        <title>Molecular analysis of Caenorhabditis elegans tcp-1, a gene encoding a chaperonin protein.</title>
        <authorList>
            <person name="Leroux M.R."/>
            <person name="Candido E.P.M."/>
        </authorList>
    </citation>
    <scope>NUCLEOTIDE SEQUENCE [GENOMIC DNA]</scope>
    <source>
        <strain>Bristol N2</strain>
    </source>
</reference>
<reference key="2">
    <citation type="journal article" date="1998" name="Science">
        <title>Genome sequence of the nematode C. elegans: a platform for investigating biology.</title>
        <authorList>
            <consortium name="The C. elegans sequencing consortium"/>
        </authorList>
    </citation>
    <scope>NUCLEOTIDE SEQUENCE [LARGE SCALE GENOMIC DNA]</scope>
    <source>
        <strain>Bristol N2</strain>
    </source>
</reference>
<dbReference type="EMBL" id="U07941">
    <property type="protein sequence ID" value="AAB05072.1"/>
    <property type="molecule type" value="Genomic_DNA"/>
</dbReference>
<dbReference type="EMBL" id="Z66500">
    <property type="protein sequence ID" value="CAA91308.1"/>
    <property type="molecule type" value="Genomic_DNA"/>
</dbReference>
<dbReference type="PIR" id="JC4083">
    <property type="entry name" value="JC4083"/>
</dbReference>
<dbReference type="PIR" id="T24508">
    <property type="entry name" value="T24508"/>
</dbReference>
<dbReference type="RefSeq" id="NP_495722.1">
    <property type="nucleotide sequence ID" value="NM_063321.5"/>
</dbReference>
<dbReference type="SMR" id="P41988"/>
<dbReference type="BioGRID" id="39647">
    <property type="interactions" value="16"/>
</dbReference>
<dbReference type="FunCoup" id="P41988">
    <property type="interactions" value="3019"/>
</dbReference>
<dbReference type="IntAct" id="P41988">
    <property type="interactions" value="2"/>
</dbReference>
<dbReference type="MINT" id="P41988"/>
<dbReference type="STRING" id="6239.T05C12.7.1"/>
<dbReference type="PaxDb" id="6239-T05C12.7"/>
<dbReference type="PeptideAtlas" id="P41988"/>
<dbReference type="EnsemblMetazoa" id="T05C12.7.1">
    <property type="protein sequence ID" value="T05C12.7.1"/>
    <property type="gene ID" value="WBGene00000377"/>
</dbReference>
<dbReference type="GeneID" id="174318"/>
<dbReference type="KEGG" id="cel:CELE_T05C12.7"/>
<dbReference type="UCSC" id="T05C12.7.1">
    <property type="organism name" value="c. elegans"/>
</dbReference>
<dbReference type="AGR" id="WB:WBGene00000377"/>
<dbReference type="CTD" id="174318"/>
<dbReference type="WormBase" id="T05C12.7">
    <property type="protein sequence ID" value="CE02319"/>
    <property type="gene ID" value="WBGene00000377"/>
    <property type="gene designation" value="cct-1"/>
</dbReference>
<dbReference type="eggNOG" id="KOG0360">
    <property type="taxonomic scope" value="Eukaryota"/>
</dbReference>
<dbReference type="GeneTree" id="ENSGT00550000074878"/>
<dbReference type="HOGENOM" id="CLU_008891_7_3_1"/>
<dbReference type="InParanoid" id="P41988"/>
<dbReference type="OMA" id="RGPNDYQ"/>
<dbReference type="OrthoDB" id="496at2759"/>
<dbReference type="PhylomeDB" id="P41988"/>
<dbReference type="BRENDA" id="3.6.4.B10">
    <property type="organism ID" value="1045"/>
</dbReference>
<dbReference type="Reactome" id="R-CEL-390471">
    <property type="pathway name" value="Association of TriC/CCT with target proteins during biosynthesis"/>
</dbReference>
<dbReference type="Reactome" id="R-CEL-6814122">
    <property type="pathway name" value="Cooperation of PDCL (PhLP1) and TRiC/CCT in G-protein beta folding"/>
</dbReference>
<dbReference type="PRO" id="PR:P41988"/>
<dbReference type="Proteomes" id="UP000001940">
    <property type="component" value="Chromosome II"/>
</dbReference>
<dbReference type="Bgee" id="WBGene00000377">
    <property type="expression patterns" value="Expressed in germ line (C elegans) and 4 other cell types or tissues"/>
</dbReference>
<dbReference type="GO" id="GO:0005832">
    <property type="term" value="C:chaperonin-containing T-complex"/>
    <property type="evidence" value="ECO:0000314"/>
    <property type="project" value="WormBase"/>
</dbReference>
<dbReference type="GO" id="GO:0005634">
    <property type="term" value="C:nucleus"/>
    <property type="evidence" value="ECO:0000314"/>
    <property type="project" value="WormBase"/>
</dbReference>
<dbReference type="GO" id="GO:0005524">
    <property type="term" value="F:ATP binding"/>
    <property type="evidence" value="ECO:0007669"/>
    <property type="project" value="UniProtKB-KW"/>
</dbReference>
<dbReference type="GO" id="GO:0016887">
    <property type="term" value="F:ATP hydrolysis activity"/>
    <property type="evidence" value="ECO:0007669"/>
    <property type="project" value="InterPro"/>
</dbReference>
<dbReference type="GO" id="GO:0140662">
    <property type="term" value="F:ATP-dependent protein folding chaperone"/>
    <property type="evidence" value="ECO:0007669"/>
    <property type="project" value="InterPro"/>
</dbReference>
<dbReference type="GO" id="GO:0051082">
    <property type="term" value="F:unfolded protein binding"/>
    <property type="evidence" value="ECO:0000318"/>
    <property type="project" value="GO_Central"/>
</dbReference>
<dbReference type="GO" id="GO:0006457">
    <property type="term" value="P:protein folding"/>
    <property type="evidence" value="ECO:0000318"/>
    <property type="project" value="GO_Central"/>
</dbReference>
<dbReference type="CDD" id="cd03335">
    <property type="entry name" value="TCP1_alpha"/>
    <property type="match status" value="1"/>
</dbReference>
<dbReference type="FunFam" id="3.50.7.10:FF:000009">
    <property type="entry name" value="T-complex protein 1 subunit alpha"/>
    <property type="match status" value="1"/>
</dbReference>
<dbReference type="FunFam" id="1.10.560.10:FF:000070">
    <property type="entry name" value="Uncharacterized protein"/>
    <property type="match status" value="1"/>
</dbReference>
<dbReference type="Gene3D" id="3.50.7.10">
    <property type="entry name" value="GroEL"/>
    <property type="match status" value="1"/>
</dbReference>
<dbReference type="Gene3D" id="1.10.560.10">
    <property type="entry name" value="GroEL-like equatorial domain"/>
    <property type="match status" value="1"/>
</dbReference>
<dbReference type="Gene3D" id="3.30.260.10">
    <property type="entry name" value="TCP-1-like chaperonin intermediate domain"/>
    <property type="match status" value="1"/>
</dbReference>
<dbReference type="InterPro" id="IPR012715">
    <property type="entry name" value="Chap_CCT_alpha"/>
</dbReference>
<dbReference type="InterPro" id="IPR017998">
    <property type="entry name" value="Chaperone_TCP-1"/>
</dbReference>
<dbReference type="InterPro" id="IPR002194">
    <property type="entry name" value="Chaperonin_TCP-1_CS"/>
</dbReference>
<dbReference type="InterPro" id="IPR002423">
    <property type="entry name" value="Cpn60/GroEL/TCP-1"/>
</dbReference>
<dbReference type="InterPro" id="IPR027409">
    <property type="entry name" value="GroEL-like_apical_dom_sf"/>
</dbReference>
<dbReference type="InterPro" id="IPR027413">
    <property type="entry name" value="GROEL-like_equatorial_sf"/>
</dbReference>
<dbReference type="InterPro" id="IPR027410">
    <property type="entry name" value="TCP-1-like_intermed_sf"/>
</dbReference>
<dbReference type="InterPro" id="IPR053374">
    <property type="entry name" value="TCP-1_chaperonin"/>
</dbReference>
<dbReference type="InterPro" id="IPR054827">
    <property type="entry name" value="thermosome_alpha"/>
</dbReference>
<dbReference type="NCBIfam" id="TIGR02340">
    <property type="entry name" value="chap_CCT_alpha"/>
    <property type="match status" value="1"/>
</dbReference>
<dbReference type="NCBIfam" id="NF041082">
    <property type="entry name" value="thermosome_alpha"/>
    <property type="match status" value="1"/>
</dbReference>
<dbReference type="NCBIfam" id="NF041083">
    <property type="entry name" value="thermosome_beta"/>
    <property type="match status" value="1"/>
</dbReference>
<dbReference type="PANTHER" id="PTHR11353">
    <property type="entry name" value="CHAPERONIN"/>
    <property type="match status" value="1"/>
</dbReference>
<dbReference type="Pfam" id="PF00118">
    <property type="entry name" value="Cpn60_TCP1"/>
    <property type="match status" value="1"/>
</dbReference>
<dbReference type="PRINTS" id="PR00304">
    <property type="entry name" value="TCOMPLEXTCP1"/>
</dbReference>
<dbReference type="SUPFAM" id="SSF52029">
    <property type="entry name" value="GroEL apical domain-like"/>
    <property type="match status" value="1"/>
</dbReference>
<dbReference type="SUPFAM" id="SSF48592">
    <property type="entry name" value="GroEL equatorial domain-like"/>
    <property type="match status" value="1"/>
</dbReference>
<dbReference type="SUPFAM" id="SSF54849">
    <property type="entry name" value="GroEL-intermediate domain like"/>
    <property type="match status" value="1"/>
</dbReference>
<dbReference type="PROSITE" id="PS00750">
    <property type="entry name" value="TCP1_1"/>
    <property type="match status" value="1"/>
</dbReference>
<dbReference type="PROSITE" id="PS00751">
    <property type="entry name" value="TCP1_2"/>
    <property type="match status" value="1"/>
</dbReference>
<dbReference type="PROSITE" id="PS00995">
    <property type="entry name" value="TCP1_3"/>
    <property type="match status" value="1"/>
</dbReference>
<protein>
    <recommendedName>
        <fullName>T-complex protein 1 subunit alpha</fullName>
        <shortName>TCP-1-alpha</shortName>
    </recommendedName>
    <alternativeName>
        <fullName>CCT-alpha</fullName>
    </alternativeName>
</protein>